<dbReference type="EMBL" id="AY128507">
    <property type="protein sequence ID" value="AAM95449.1"/>
    <property type="molecule type" value="mRNA"/>
</dbReference>
<dbReference type="RefSeq" id="NP_989868.2">
    <property type="nucleotide sequence ID" value="NM_204537.1"/>
</dbReference>
<dbReference type="SMR" id="Q8JG54"/>
<dbReference type="FunCoup" id="Q8JG54">
    <property type="interactions" value="90"/>
</dbReference>
<dbReference type="STRING" id="9031.ENSGALP00000053765"/>
<dbReference type="GlyCosmos" id="Q8JG54">
    <property type="glycosylation" value="2 sites, No reported glycans"/>
</dbReference>
<dbReference type="GlyGen" id="Q8JG54">
    <property type="glycosylation" value="2 sites"/>
</dbReference>
<dbReference type="PaxDb" id="9031-ENSGALP00000042077"/>
<dbReference type="GeneID" id="395214"/>
<dbReference type="KEGG" id="gga:395214"/>
<dbReference type="CTD" id="56963"/>
<dbReference type="VEuPathDB" id="HostDB:geneid_395214"/>
<dbReference type="eggNOG" id="ENOG502QSTJ">
    <property type="taxonomic scope" value="Eukaryota"/>
</dbReference>
<dbReference type="InParanoid" id="Q8JG54"/>
<dbReference type="OrthoDB" id="10013795at2759"/>
<dbReference type="PhylomeDB" id="Q8JG54"/>
<dbReference type="PRO" id="PR:Q8JG54"/>
<dbReference type="Proteomes" id="UP000000539">
    <property type="component" value="Unassembled WGS sequence"/>
</dbReference>
<dbReference type="GO" id="GO:0005886">
    <property type="term" value="C:plasma membrane"/>
    <property type="evidence" value="ECO:0000318"/>
    <property type="project" value="GO_Central"/>
</dbReference>
<dbReference type="GO" id="GO:0098552">
    <property type="term" value="C:side of membrane"/>
    <property type="evidence" value="ECO:0007669"/>
    <property type="project" value="UniProtKB-KW"/>
</dbReference>
<dbReference type="GO" id="GO:0015026">
    <property type="term" value="F:coreceptor activity"/>
    <property type="evidence" value="ECO:0000318"/>
    <property type="project" value="GO_Central"/>
</dbReference>
<dbReference type="GO" id="GO:0030509">
    <property type="term" value="P:BMP signaling pathway"/>
    <property type="evidence" value="ECO:0000318"/>
    <property type="project" value="GO_Central"/>
</dbReference>
<dbReference type="FunFam" id="3.40.1000.10:FF:000001">
    <property type="entry name" value="Repulsive guidance molecule BMP co-receptor a"/>
    <property type="match status" value="1"/>
</dbReference>
<dbReference type="Gene3D" id="3.40.1000.10">
    <property type="entry name" value="Mog1/PsbP, alpha/beta/alpha sandwich"/>
    <property type="match status" value="1"/>
</dbReference>
<dbReference type="InterPro" id="IPR040287">
    <property type="entry name" value="RGM"/>
</dbReference>
<dbReference type="InterPro" id="IPR009496">
    <property type="entry name" value="RGM_C"/>
</dbReference>
<dbReference type="InterPro" id="IPR010536">
    <property type="entry name" value="RGM_N"/>
</dbReference>
<dbReference type="PANTHER" id="PTHR31428:SF4">
    <property type="entry name" value="REPULSIVE GUIDANCE MOLECULE A"/>
    <property type="match status" value="1"/>
</dbReference>
<dbReference type="PANTHER" id="PTHR31428">
    <property type="entry name" value="RGM DOMAIN FAMILY MEMBER DRAG-1"/>
    <property type="match status" value="1"/>
</dbReference>
<dbReference type="Pfam" id="PF06534">
    <property type="entry name" value="RGM_C"/>
    <property type="match status" value="1"/>
</dbReference>
<dbReference type="Pfam" id="PF06535">
    <property type="entry name" value="RGM_N"/>
    <property type="match status" value="1"/>
</dbReference>
<name>RGMA_CHICK</name>
<keyword id="KW-0068">Autocatalytic cleavage</keyword>
<keyword id="KW-1003">Cell membrane</keyword>
<keyword id="KW-0903">Direct protein sequencing</keyword>
<keyword id="KW-1015">Disulfide bond</keyword>
<keyword id="KW-0325">Glycoprotein</keyword>
<keyword id="KW-0336">GPI-anchor</keyword>
<keyword id="KW-0449">Lipoprotein</keyword>
<keyword id="KW-0472">Membrane</keyword>
<keyword id="KW-1185">Reference proteome</keyword>
<keyword id="KW-0732">Signal</keyword>
<gene>
    <name type="primary">RGMA</name>
    <name type="synonym">RGM</name>
</gene>
<accession>Q8JG54</accession>
<comment type="function">
    <text>Acts as an axon-specific repulsive guidance molecule in the retinotectal system. Repulsive for a subset of axons of the temporal half of the retina. Provides thus positional information for the temporal axons invading the optic tectum in the stratum opticum.</text>
</comment>
<comment type="subcellular location">
    <subcellularLocation>
        <location evidence="4">Cell membrane</location>
        <topology evidence="4">Lipid-anchor</topology>
        <topology evidence="4">GPI-anchor</topology>
    </subcellularLocation>
</comment>
<comment type="developmental stage">
    <text>Expressed in the periventricular layer surrounding the tectal ventricle (9 dpc). Forms a spatial gradient with increasing concentration from the anterior to posterior pole of the embryonic optic tectum.</text>
</comment>
<comment type="PTM">
    <text evidence="1">Autocatalytically cleaved at low pH; the two chains remain linked via two disulfide bonds.</text>
</comment>
<comment type="similarity">
    <text evidence="5">Belongs to the repulsive guidance molecule (RGM) family.</text>
</comment>
<protein>
    <recommendedName>
        <fullName>Repulsive guidance molecule A</fullName>
    </recommendedName>
</protein>
<feature type="signal peptide" evidence="2">
    <location>
        <begin position="1"/>
        <end position="29"/>
    </location>
</feature>
<feature type="propeptide" id="PRO_0000030391" description="Removed in mature form" evidence="5">
    <location>
        <begin position="30"/>
        <end position="149"/>
    </location>
</feature>
<feature type="chain" id="PRO_0000030392" description="Repulsive guidance molecule A">
    <location>
        <begin position="150"/>
        <end position="404"/>
    </location>
</feature>
<feature type="propeptide" id="PRO_0000030393" description="Removed in mature form" evidence="2">
    <location>
        <begin position="405"/>
        <end position="432"/>
    </location>
</feature>
<feature type="region of interest" description="Disordered" evidence="3">
    <location>
        <begin position="99"/>
        <end position="122"/>
    </location>
</feature>
<feature type="site" description="Cleavage; by autolysis" evidence="1">
    <location>
        <begin position="149"/>
        <end position="150"/>
    </location>
</feature>
<feature type="lipid moiety-binding region" description="GPI-anchor amidated asparagine" evidence="2">
    <location>
        <position position="404"/>
    </location>
</feature>
<feature type="glycosylation site" description="N-linked (GlcNAc...) asparagine" evidence="2">
    <location>
        <position position="96"/>
    </location>
</feature>
<feature type="glycosylation site" description="N-linked (GlcNAc...) asparagine" evidence="2">
    <location>
        <position position="140"/>
    </location>
</feature>
<feature type="disulfide bond" evidence="1">
    <location>
        <begin position="126"/>
        <end position="207"/>
    </location>
</feature>
<feature type="disulfide bond" evidence="1">
    <location>
        <begin position="144"/>
        <end position="296"/>
    </location>
</feature>
<organism>
    <name type="scientific">Gallus gallus</name>
    <name type="common">Chicken</name>
    <dbReference type="NCBI Taxonomy" id="9031"/>
    <lineage>
        <taxon>Eukaryota</taxon>
        <taxon>Metazoa</taxon>
        <taxon>Chordata</taxon>
        <taxon>Craniata</taxon>
        <taxon>Vertebrata</taxon>
        <taxon>Euteleostomi</taxon>
        <taxon>Archelosauria</taxon>
        <taxon>Archosauria</taxon>
        <taxon>Dinosauria</taxon>
        <taxon>Saurischia</taxon>
        <taxon>Theropoda</taxon>
        <taxon>Coelurosauria</taxon>
        <taxon>Aves</taxon>
        <taxon>Neognathae</taxon>
        <taxon>Galloanserae</taxon>
        <taxon>Galliformes</taxon>
        <taxon>Phasianidae</taxon>
        <taxon>Phasianinae</taxon>
        <taxon>Gallus</taxon>
    </lineage>
</organism>
<reference key="1">
    <citation type="journal article" date="2002" name="Nature">
        <title>RGM is a repulsive guidance molecule for retinal axons.</title>
        <authorList>
            <person name="Monnier P.P."/>
            <person name="Sierra A."/>
            <person name="Macchi P."/>
            <person name="Deitinghoff L."/>
            <person name="Andersen J.S."/>
            <person name="Mann M."/>
            <person name="Flad M."/>
            <person name="Hornberger M.R."/>
            <person name="Stahl B."/>
            <person name="Bonhoeffer F."/>
            <person name="Mueller B.K."/>
        </authorList>
    </citation>
    <scope>NUCLEOTIDE SEQUENCE [MRNA]</scope>
    <scope>PARTIAL PROTEIN SEQUENCE</scope>
    <scope>SUBCELLULAR LOCATION</scope>
    <scope>IDENTIFICATION BY MASS SPECTROMETRY</scope>
    <source>
        <tissue>Embryonic eye</tissue>
    </source>
</reference>
<evidence type="ECO:0000250" key="1"/>
<evidence type="ECO:0000255" key="2"/>
<evidence type="ECO:0000256" key="3">
    <source>
        <dbReference type="SAM" id="MobiDB-lite"/>
    </source>
</evidence>
<evidence type="ECO:0000269" key="4">
    <source>
    </source>
</evidence>
<evidence type="ECO:0000305" key="5"/>
<sequence length="432" mass="47775">MGRGAGSTALGLFQILPVFLCIFPPVTSPCKILKCNSEFWAATSGSHHLGAEETPEFCTALRAYAHCTRRTARTCRGDLAYHSAVHGIDDLMVQHNCSKDGPTSQPRLRTLPPGDSQERSDSPEICHYEKSFHKHSAAPNYTHCGLFGDPHLRTFTDTFQTCKVQGAWPLIDNNYLNVQVTNTPVLPGSSATATSKLTIIFKSFQECVEQKVYQAEMDELPAAFADGSKNGGDKHGANSLKITEKVSGQHIEIQAKYIGTTIVVRQVGRYLTFAVRMPEEVVNAVEDRDSQGLYLCLRGCPLNQQIDFQTFRLAQAAEGRARRKGPSLPAPPEAFTYESATAKCREKLPVEDLYFQSCVFDLLTTGDVNFMLAAYYAFEDVKMLHSNKDKLHLYERTRALAPGNAAPSEHPWALPALWVALLSLSQCWLGLL</sequence>
<proteinExistence type="evidence at protein level"/>